<name>ILL3_ORYSJ</name>
<proteinExistence type="evidence at transcript level"/>
<protein>
    <recommendedName>
        <fullName>IAA-amino acid hydrolase ILR1-like 3</fullName>
        <ecNumber>3.5.1.-</ecNumber>
    </recommendedName>
</protein>
<feature type="signal peptide" evidence="2">
    <location>
        <begin position="1"/>
        <end status="unknown"/>
    </location>
</feature>
<feature type="chain" id="PRO_0000351639" description="IAA-amino acid hydrolase ILR1-like 3">
    <location>
        <begin status="unknown"/>
        <end position="417"/>
    </location>
</feature>
<reference key="1">
    <citation type="journal article" date="2005" name="Genome Res.">
        <title>Sequence, annotation, and analysis of synteny between rice chromosome 3 and diverged grass species.</title>
        <authorList>
            <consortium name="The rice chromosome 3 sequencing consortium"/>
            <person name="Buell C.R."/>
            <person name="Yuan Q."/>
            <person name="Ouyang S."/>
            <person name="Liu J."/>
            <person name="Zhu W."/>
            <person name="Wang A."/>
            <person name="Maiti R."/>
            <person name="Haas B."/>
            <person name="Wortman J."/>
            <person name="Pertea M."/>
            <person name="Jones K.M."/>
            <person name="Kim M."/>
            <person name="Overton L."/>
            <person name="Tsitrin T."/>
            <person name="Fadrosh D."/>
            <person name="Bera J."/>
            <person name="Weaver B."/>
            <person name="Jin S."/>
            <person name="Johri S."/>
            <person name="Reardon M."/>
            <person name="Webb K."/>
            <person name="Hill J."/>
            <person name="Moffat K."/>
            <person name="Tallon L."/>
            <person name="Van Aken S."/>
            <person name="Lewis M."/>
            <person name="Utterback T."/>
            <person name="Feldblyum T."/>
            <person name="Zismann V."/>
            <person name="Iobst S."/>
            <person name="Hsiao J."/>
            <person name="de Vazeille A.R."/>
            <person name="Salzberg S.L."/>
            <person name="White O."/>
            <person name="Fraser C.M."/>
            <person name="Yu Y."/>
            <person name="Kim H."/>
            <person name="Rambo T."/>
            <person name="Currie J."/>
            <person name="Collura K."/>
            <person name="Kernodle-Thompson S."/>
            <person name="Wei F."/>
            <person name="Kudrna K."/>
            <person name="Ammiraju J.S.S."/>
            <person name="Luo M."/>
            <person name="Goicoechea J.L."/>
            <person name="Wing R.A."/>
            <person name="Henry D."/>
            <person name="Oates R."/>
            <person name="Palmer M."/>
            <person name="Pries G."/>
            <person name="Saski C."/>
            <person name="Simmons J."/>
            <person name="Soderlund C."/>
            <person name="Nelson W."/>
            <person name="de la Bastide M."/>
            <person name="Spiegel L."/>
            <person name="Nascimento L."/>
            <person name="Huang E."/>
            <person name="Preston R."/>
            <person name="Zutavern T."/>
            <person name="Palmer L."/>
            <person name="O'Shaughnessy A."/>
            <person name="Dike S."/>
            <person name="McCombie W.R."/>
            <person name="Minx P."/>
            <person name="Cordum H."/>
            <person name="Wilson R."/>
            <person name="Jin W."/>
            <person name="Lee H.R."/>
            <person name="Jiang J."/>
            <person name="Jackson S."/>
        </authorList>
    </citation>
    <scope>NUCLEOTIDE SEQUENCE [LARGE SCALE GENOMIC DNA]</scope>
    <source>
        <strain>cv. Nipponbare</strain>
    </source>
</reference>
<reference key="2">
    <citation type="journal article" date="2005" name="Nature">
        <title>The map-based sequence of the rice genome.</title>
        <authorList>
            <consortium name="International rice genome sequencing project (IRGSP)"/>
        </authorList>
    </citation>
    <scope>NUCLEOTIDE SEQUENCE [LARGE SCALE GENOMIC DNA]</scope>
    <source>
        <strain>cv. Nipponbare</strain>
    </source>
</reference>
<reference key="3">
    <citation type="journal article" date="2008" name="Nucleic Acids Res.">
        <title>The rice annotation project database (RAP-DB): 2008 update.</title>
        <authorList>
            <consortium name="The rice annotation project (RAP)"/>
        </authorList>
    </citation>
    <scope>GENOME REANNOTATION</scope>
    <source>
        <strain>cv. Nipponbare</strain>
    </source>
</reference>
<reference key="4">
    <citation type="journal article" date="2013" name="Rice">
        <title>Improvement of the Oryza sativa Nipponbare reference genome using next generation sequence and optical map data.</title>
        <authorList>
            <person name="Kawahara Y."/>
            <person name="de la Bastide M."/>
            <person name="Hamilton J.P."/>
            <person name="Kanamori H."/>
            <person name="McCombie W.R."/>
            <person name="Ouyang S."/>
            <person name="Schwartz D.C."/>
            <person name="Tanaka T."/>
            <person name="Wu J."/>
            <person name="Zhou S."/>
            <person name="Childs K.L."/>
            <person name="Davidson R.M."/>
            <person name="Lin H."/>
            <person name="Quesada-Ocampo L."/>
            <person name="Vaillancourt B."/>
            <person name="Sakai H."/>
            <person name="Lee S.S."/>
            <person name="Kim J."/>
            <person name="Numa H."/>
            <person name="Itoh T."/>
            <person name="Buell C.R."/>
            <person name="Matsumoto T."/>
        </authorList>
    </citation>
    <scope>GENOME REANNOTATION</scope>
    <source>
        <strain>cv. Nipponbare</strain>
    </source>
</reference>
<reference key="5">
    <citation type="journal article" date="2003" name="Science">
        <title>Collection, mapping, and annotation of over 28,000 cDNA clones from japonica rice.</title>
        <authorList>
            <consortium name="The rice full-length cDNA consortium"/>
        </authorList>
    </citation>
    <scope>NUCLEOTIDE SEQUENCE [LARGE SCALE MRNA] OF 142-417</scope>
    <source>
        <strain>cv. Nipponbare</strain>
    </source>
</reference>
<evidence type="ECO:0000250" key="1"/>
<evidence type="ECO:0000255" key="2"/>
<evidence type="ECO:0000305" key="3"/>
<gene>
    <name type="primary">ILL3</name>
    <name type="ordered locus">Os03g0836800</name>
    <name type="ordered locus">LOC_Os03g62060</name>
    <name type="ORF">OSJNBa0042I09.29</name>
    <name type="ORF">OSJNBa0096I06.2</name>
</gene>
<dbReference type="EC" id="3.5.1.-"/>
<dbReference type="EMBL" id="AC092557">
    <property type="protein sequence ID" value="AAR88567.1"/>
    <property type="molecule type" value="Genomic_DNA"/>
</dbReference>
<dbReference type="EMBL" id="AC104487">
    <property type="protein sequence ID" value="AAO41148.1"/>
    <property type="molecule type" value="Genomic_DNA"/>
</dbReference>
<dbReference type="EMBL" id="DP000009">
    <property type="protein sequence ID" value="ABF99768.1"/>
    <property type="molecule type" value="Genomic_DNA"/>
</dbReference>
<dbReference type="EMBL" id="AP008209">
    <property type="protein sequence ID" value="BAF13741.2"/>
    <property type="status" value="ALT_SEQ"/>
    <property type="molecule type" value="Genomic_DNA"/>
</dbReference>
<dbReference type="EMBL" id="AP014959">
    <property type="status" value="NOT_ANNOTATED_CDS"/>
    <property type="molecule type" value="Genomic_DNA"/>
</dbReference>
<dbReference type="EMBL" id="AK061197">
    <property type="status" value="NOT_ANNOTATED_CDS"/>
    <property type="molecule type" value="mRNA"/>
</dbReference>
<dbReference type="RefSeq" id="XP_015628929.1">
    <property type="nucleotide sequence ID" value="XM_015773443.1"/>
</dbReference>
<dbReference type="SMR" id="Q851L5"/>
<dbReference type="FunCoup" id="Q851L5">
    <property type="interactions" value="421"/>
</dbReference>
<dbReference type="STRING" id="39947.Q851L5"/>
<dbReference type="MEROPS" id="M20.A02"/>
<dbReference type="PaxDb" id="39947-Q851L5"/>
<dbReference type="KEGG" id="dosa:Os03g0836800"/>
<dbReference type="eggNOG" id="ENOG502QQEM">
    <property type="taxonomic scope" value="Eukaryota"/>
</dbReference>
<dbReference type="InParanoid" id="Q851L5"/>
<dbReference type="OrthoDB" id="6119954at2759"/>
<dbReference type="PlantReactome" id="R-OSA-1119580">
    <property type="pathway name" value="IAA biosynthesis II"/>
</dbReference>
<dbReference type="Proteomes" id="UP000000763">
    <property type="component" value="Chromosome 3"/>
</dbReference>
<dbReference type="Proteomes" id="UP000059680">
    <property type="component" value="Chromosome 3"/>
</dbReference>
<dbReference type="GO" id="GO:0010179">
    <property type="term" value="F:IAA-Ala conjugate hydrolase activity"/>
    <property type="evidence" value="ECO:0000318"/>
    <property type="project" value="GO_Central"/>
</dbReference>
<dbReference type="GO" id="GO:0009850">
    <property type="term" value="P:auxin metabolic process"/>
    <property type="evidence" value="ECO:0000318"/>
    <property type="project" value="GO_Central"/>
</dbReference>
<dbReference type="CDD" id="cd08017">
    <property type="entry name" value="M20_IAA_Hyd"/>
    <property type="match status" value="1"/>
</dbReference>
<dbReference type="FunFam" id="3.30.70.360:FF:000001">
    <property type="entry name" value="N-acetyldiaminopimelate deacetylase"/>
    <property type="match status" value="1"/>
</dbReference>
<dbReference type="Gene3D" id="3.30.70.360">
    <property type="match status" value="1"/>
</dbReference>
<dbReference type="Gene3D" id="3.40.630.10">
    <property type="entry name" value="Zn peptidases"/>
    <property type="match status" value="1"/>
</dbReference>
<dbReference type="InterPro" id="IPR017439">
    <property type="entry name" value="Amidohydrolase"/>
</dbReference>
<dbReference type="InterPro" id="IPR036264">
    <property type="entry name" value="Bact_exopeptidase_dim_dom"/>
</dbReference>
<dbReference type="InterPro" id="IPR044757">
    <property type="entry name" value="ILR1-like_Hyd"/>
</dbReference>
<dbReference type="InterPro" id="IPR002933">
    <property type="entry name" value="Peptidase_M20"/>
</dbReference>
<dbReference type="InterPro" id="IPR011650">
    <property type="entry name" value="Peptidase_M20_dimer"/>
</dbReference>
<dbReference type="NCBIfam" id="TIGR01891">
    <property type="entry name" value="amidohydrolases"/>
    <property type="match status" value="1"/>
</dbReference>
<dbReference type="PANTHER" id="PTHR11014:SF99">
    <property type="entry name" value="IAA-AMINO ACID HYDROLASE ILR1-LIKE 3"/>
    <property type="match status" value="1"/>
</dbReference>
<dbReference type="PANTHER" id="PTHR11014">
    <property type="entry name" value="PEPTIDASE M20 FAMILY MEMBER"/>
    <property type="match status" value="1"/>
</dbReference>
<dbReference type="Pfam" id="PF07687">
    <property type="entry name" value="M20_dimer"/>
    <property type="match status" value="1"/>
</dbReference>
<dbReference type="Pfam" id="PF01546">
    <property type="entry name" value="Peptidase_M20"/>
    <property type="match status" value="1"/>
</dbReference>
<dbReference type="PIRSF" id="PIRSF005962">
    <property type="entry name" value="Pept_M20D_amidohydro"/>
    <property type="match status" value="1"/>
</dbReference>
<dbReference type="SUPFAM" id="SSF55031">
    <property type="entry name" value="Bacterial exopeptidase dimerisation domain"/>
    <property type="match status" value="1"/>
</dbReference>
<dbReference type="SUPFAM" id="SSF53187">
    <property type="entry name" value="Zn-dependent exopeptidases"/>
    <property type="match status" value="1"/>
</dbReference>
<comment type="function">
    <text evidence="1">Hydrolyzes certain amino acid conjugates of the plant growth regulator indole-3-acetic acid (IAA).</text>
</comment>
<comment type="similarity">
    <text evidence="3">Belongs to the peptidase M20 family.</text>
</comment>
<comment type="sequence caution" evidence="3">
    <conflict type="erroneous gene model prediction">
        <sequence resource="EMBL-CDS" id="BAF13741"/>
    </conflict>
</comment>
<accession>Q851L5</accession>
<accession>Q0DLZ7</accession>
<keyword id="KW-0378">Hydrolase</keyword>
<keyword id="KW-1185">Reference proteome</keyword>
<keyword id="KW-0732">Signal</keyword>
<sequence length="417" mass="43990">MSTTAATTLGRELLEAARAPEFAGWLRGLRRRIHQHPELAFQEHRTSALVRAELDALGVAYVWPVAQTGVVATVVGAAGPGPVFGLRADMDALPIQEMVEWEFKSLEDGKMHACGHDVHVAMLLGAAKLLQSRRDHFNGKVKLVFQPAEEGYAGGYYVLEEGAVDDVQGIFGMHVDAGLPAGVVASRPGPFLAGSARFTATINGKGGHAAAPHHAVDPIVAVSSAVLSLQQIVARETDPLQGAVVSVTTIKGGEAFNVIPESVTLGGTLRSMTTDGMSYLMKRIREVIEGQAAVNRCTAAVDFMEDKLPPYPATVNDEEMYAHAKAVAESMLGEANVKLSPQGMGAEDFGFYAQRIPAAFFGIGVGNDGGGMAETTTKNQLHSPHFVVDEEALPVGAAFHAAVAIEYLNKNASGPSA</sequence>
<organism>
    <name type="scientific">Oryza sativa subsp. japonica</name>
    <name type="common">Rice</name>
    <dbReference type="NCBI Taxonomy" id="39947"/>
    <lineage>
        <taxon>Eukaryota</taxon>
        <taxon>Viridiplantae</taxon>
        <taxon>Streptophyta</taxon>
        <taxon>Embryophyta</taxon>
        <taxon>Tracheophyta</taxon>
        <taxon>Spermatophyta</taxon>
        <taxon>Magnoliopsida</taxon>
        <taxon>Liliopsida</taxon>
        <taxon>Poales</taxon>
        <taxon>Poaceae</taxon>
        <taxon>BOP clade</taxon>
        <taxon>Oryzoideae</taxon>
        <taxon>Oryzeae</taxon>
        <taxon>Oryzinae</taxon>
        <taxon>Oryza</taxon>
        <taxon>Oryza sativa</taxon>
    </lineage>
</organism>